<feature type="chain" id="PRO_1000090965" description="Aspartate--tRNA(Asp/Asn) ligase">
    <location>
        <begin position="1"/>
        <end position="583"/>
    </location>
</feature>
<feature type="region of interest" description="Aspartate" evidence="1">
    <location>
        <begin position="196"/>
        <end position="199"/>
    </location>
</feature>
<feature type="binding site" evidence="1">
    <location>
        <position position="172"/>
    </location>
    <ligand>
        <name>L-aspartate</name>
        <dbReference type="ChEBI" id="CHEBI:29991"/>
    </ligand>
</feature>
<feature type="binding site" evidence="1">
    <location>
        <begin position="218"/>
        <end position="220"/>
    </location>
    <ligand>
        <name>ATP</name>
        <dbReference type="ChEBI" id="CHEBI:30616"/>
    </ligand>
</feature>
<feature type="binding site" evidence="1">
    <location>
        <position position="218"/>
    </location>
    <ligand>
        <name>L-aspartate</name>
        <dbReference type="ChEBI" id="CHEBI:29991"/>
    </ligand>
</feature>
<feature type="binding site" evidence="1">
    <location>
        <position position="227"/>
    </location>
    <ligand>
        <name>ATP</name>
        <dbReference type="ChEBI" id="CHEBI:30616"/>
    </ligand>
</feature>
<feature type="binding site" evidence="1">
    <location>
        <position position="445"/>
    </location>
    <ligand>
        <name>L-aspartate</name>
        <dbReference type="ChEBI" id="CHEBI:29991"/>
    </ligand>
</feature>
<feature type="binding site" evidence="1">
    <location>
        <position position="479"/>
    </location>
    <ligand>
        <name>ATP</name>
        <dbReference type="ChEBI" id="CHEBI:30616"/>
    </ligand>
</feature>
<feature type="binding site" evidence="1">
    <location>
        <position position="486"/>
    </location>
    <ligand>
        <name>L-aspartate</name>
        <dbReference type="ChEBI" id="CHEBI:29991"/>
    </ligand>
</feature>
<feature type="binding site" evidence="1">
    <location>
        <begin position="531"/>
        <end position="534"/>
    </location>
    <ligand>
        <name>ATP</name>
        <dbReference type="ChEBI" id="CHEBI:30616"/>
    </ligand>
</feature>
<feature type="site" description="Important for tRNA non-discrimination" evidence="1">
    <location>
        <position position="31"/>
    </location>
</feature>
<organism>
    <name type="scientific">Borrelia recurrentis (strain A1)</name>
    <dbReference type="NCBI Taxonomy" id="412418"/>
    <lineage>
        <taxon>Bacteria</taxon>
        <taxon>Pseudomonadati</taxon>
        <taxon>Spirochaetota</taxon>
        <taxon>Spirochaetia</taxon>
        <taxon>Spirochaetales</taxon>
        <taxon>Borreliaceae</taxon>
        <taxon>Borrelia</taxon>
    </lineage>
</organism>
<reference key="1">
    <citation type="journal article" date="2008" name="PLoS Genet.">
        <title>The genome of Borrelia recurrentis, the agent of deadly louse-borne relapsing fever, is a degraded subset of tick-borne Borrelia duttonii.</title>
        <authorList>
            <person name="Lescot M."/>
            <person name="Audic S."/>
            <person name="Robert C."/>
            <person name="Nguyen T.T."/>
            <person name="Blanc G."/>
            <person name="Cutler S.J."/>
            <person name="Wincker P."/>
            <person name="Couloux A."/>
            <person name="Claverie J.-M."/>
            <person name="Raoult D."/>
            <person name="Drancourt M."/>
        </authorList>
    </citation>
    <scope>NUCLEOTIDE SEQUENCE [LARGE SCALE GENOMIC DNA]</scope>
    <source>
        <strain>A1</strain>
    </source>
</reference>
<gene>
    <name evidence="1" type="primary">aspS</name>
    <name type="ordered locus">BRE_448</name>
</gene>
<proteinExistence type="inferred from homology"/>
<evidence type="ECO:0000255" key="1">
    <source>
        <dbReference type="HAMAP-Rule" id="MF_00044"/>
    </source>
</evidence>
<comment type="function">
    <text evidence="1">Aspartyl-tRNA synthetase with relaxed tRNA specificity since it is able to aspartylate not only its cognate tRNA(Asp) but also tRNA(Asn). Reaction proceeds in two steps: L-aspartate is first activated by ATP to form Asp-AMP and then transferred to the acceptor end of tRNA(Asp/Asn).</text>
</comment>
<comment type="catalytic activity">
    <reaction evidence="1">
        <text>tRNA(Asx) + L-aspartate + ATP = L-aspartyl-tRNA(Asx) + AMP + diphosphate</text>
        <dbReference type="Rhea" id="RHEA:18349"/>
        <dbReference type="Rhea" id="RHEA-COMP:9710"/>
        <dbReference type="Rhea" id="RHEA-COMP:9711"/>
        <dbReference type="ChEBI" id="CHEBI:29991"/>
        <dbReference type="ChEBI" id="CHEBI:30616"/>
        <dbReference type="ChEBI" id="CHEBI:33019"/>
        <dbReference type="ChEBI" id="CHEBI:78442"/>
        <dbReference type="ChEBI" id="CHEBI:78516"/>
        <dbReference type="ChEBI" id="CHEBI:456215"/>
        <dbReference type="EC" id="6.1.1.23"/>
    </reaction>
</comment>
<comment type="subunit">
    <text evidence="1">Homodimer.</text>
</comment>
<comment type="subcellular location">
    <subcellularLocation>
        <location evidence="1">Cytoplasm</location>
    </subcellularLocation>
</comment>
<comment type="similarity">
    <text evidence="1">Belongs to the class-II aminoacyl-tRNA synthetase family. Type 1 subfamily.</text>
</comment>
<protein>
    <recommendedName>
        <fullName evidence="1">Aspartate--tRNA(Asp/Asn) ligase</fullName>
        <ecNumber evidence="1">6.1.1.23</ecNumber>
    </recommendedName>
    <alternativeName>
        <fullName evidence="1">Aspartyl-tRNA synthetase</fullName>
        <shortName evidence="1">AspRS</shortName>
    </alternativeName>
    <alternativeName>
        <fullName evidence="1">Non-discriminating aspartyl-tRNA synthetase</fullName>
        <shortName evidence="1">ND-AspRS</shortName>
    </alternativeName>
</protein>
<accession>B5RRQ0</accession>
<sequence length="583" mass="67833">MFKIIKCNQINNKLINKKIEINGWVKKIRNHGKVTFINIRDRYDEAQILVSDEKLLKITSQIKMEYCIKIQGKLNLRPLELVNREMKTGELEIIAENIDIISKCNELPFMIENNNNASDNSKLEYRYLDLRREEQKQKIILRSKVIHIIRNHLTKQDFLELETPTFVKSTPEGARDFLVPSRIHKGHFYALPQSPQIYKQLAMIAGLDKYFQIARCYRDEDSRGDRQPEFTQLDLEMSFIKKENIFKLIENLIFTIFKNSLNITLPKKFKKITYKDAMNIYGSDKPDTRYELLIQDMSKALKQSPFDVFKDTLQNKGTIKALIIKNQAHNFSRSKINSLEEHAKLYKARTLYFTKIENNEFTGGIAKFINPIKKTLIETYSLKNNDIIFFIADLWETACKAIGQIRIKIATELNLINKNIFEFLWIYDFPLFEYDEDTQSYKAAHHMFSMPQAKYINTLESNPSKVLGEVYDIVLNGTELGSGSIRVHTKELQQRIFNIVGFNDKIAEERFDFFLKALEYGAPIHGGIAIGIDRLLMLMTNSNSIKDVILFPKNSFAASPLDKSPSKISDEQLKELNLTIENK</sequence>
<dbReference type="EC" id="6.1.1.23" evidence="1"/>
<dbReference type="EMBL" id="CP000993">
    <property type="protein sequence ID" value="ACH94684.1"/>
    <property type="molecule type" value="Genomic_DNA"/>
</dbReference>
<dbReference type="RefSeq" id="WP_012538910.1">
    <property type="nucleotide sequence ID" value="NC_011244.1"/>
</dbReference>
<dbReference type="SMR" id="B5RRQ0"/>
<dbReference type="KEGG" id="bre:BRE_448"/>
<dbReference type="HOGENOM" id="CLU_014330_3_2_12"/>
<dbReference type="Proteomes" id="UP000000612">
    <property type="component" value="Chromosome"/>
</dbReference>
<dbReference type="GO" id="GO:0005737">
    <property type="term" value="C:cytoplasm"/>
    <property type="evidence" value="ECO:0007669"/>
    <property type="project" value="UniProtKB-SubCell"/>
</dbReference>
<dbReference type="GO" id="GO:0004815">
    <property type="term" value="F:aspartate-tRNA ligase activity"/>
    <property type="evidence" value="ECO:0007669"/>
    <property type="project" value="UniProtKB-UniRule"/>
</dbReference>
<dbReference type="GO" id="GO:0050560">
    <property type="term" value="F:aspartate-tRNA(Asn) ligase activity"/>
    <property type="evidence" value="ECO:0007669"/>
    <property type="project" value="UniProtKB-EC"/>
</dbReference>
<dbReference type="GO" id="GO:0005524">
    <property type="term" value="F:ATP binding"/>
    <property type="evidence" value="ECO:0007669"/>
    <property type="project" value="UniProtKB-UniRule"/>
</dbReference>
<dbReference type="GO" id="GO:0003676">
    <property type="term" value="F:nucleic acid binding"/>
    <property type="evidence" value="ECO:0007669"/>
    <property type="project" value="InterPro"/>
</dbReference>
<dbReference type="GO" id="GO:0006422">
    <property type="term" value="P:aspartyl-tRNA aminoacylation"/>
    <property type="evidence" value="ECO:0007669"/>
    <property type="project" value="UniProtKB-UniRule"/>
</dbReference>
<dbReference type="CDD" id="cd00777">
    <property type="entry name" value="AspRS_core"/>
    <property type="match status" value="1"/>
</dbReference>
<dbReference type="CDD" id="cd04317">
    <property type="entry name" value="EcAspRS_like_N"/>
    <property type="match status" value="1"/>
</dbReference>
<dbReference type="Gene3D" id="3.30.930.10">
    <property type="entry name" value="Bira Bifunctional Protein, Domain 2"/>
    <property type="match status" value="1"/>
</dbReference>
<dbReference type="Gene3D" id="3.30.1360.30">
    <property type="entry name" value="GAD-like domain"/>
    <property type="match status" value="1"/>
</dbReference>
<dbReference type="Gene3D" id="2.40.50.140">
    <property type="entry name" value="Nucleic acid-binding proteins"/>
    <property type="match status" value="1"/>
</dbReference>
<dbReference type="HAMAP" id="MF_00044">
    <property type="entry name" value="Asp_tRNA_synth_type1"/>
    <property type="match status" value="1"/>
</dbReference>
<dbReference type="InterPro" id="IPR004364">
    <property type="entry name" value="Aa-tRNA-synt_II"/>
</dbReference>
<dbReference type="InterPro" id="IPR006195">
    <property type="entry name" value="aa-tRNA-synth_II"/>
</dbReference>
<dbReference type="InterPro" id="IPR045864">
    <property type="entry name" value="aa-tRNA-synth_II/BPL/LPL"/>
</dbReference>
<dbReference type="InterPro" id="IPR004524">
    <property type="entry name" value="Asp-tRNA-ligase_1"/>
</dbReference>
<dbReference type="InterPro" id="IPR047089">
    <property type="entry name" value="Asp-tRNA-ligase_1_N"/>
</dbReference>
<dbReference type="InterPro" id="IPR002312">
    <property type="entry name" value="Asp/Asn-tRNA-synth_IIb"/>
</dbReference>
<dbReference type="InterPro" id="IPR047090">
    <property type="entry name" value="AspRS_core"/>
</dbReference>
<dbReference type="InterPro" id="IPR004115">
    <property type="entry name" value="GAD-like_sf"/>
</dbReference>
<dbReference type="InterPro" id="IPR029351">
    <property type="entry name" value="GAD_dom"/>
</dbReference>
<dbReference type="InterPro" id="IPR012340">
    <property type="entry name" value="NA-bd_OB-fold"/>
</dbReference>
<dbReference type="InterPro" id="IPR004365">
    <property type="entry name" value="NA-bd_OB_tRNA"/>
</dbReference>
<dbReference type="NCBIfam" id="TIGR00459">
    <property type="entry name" value="aspS_bact"/>
    <property type="match status" value="1"/>
</dbReference>
<dbReference type="NCBIfam" id="NF001750">
    <property type="entry name" value="PRK00476.1"/>
    <property type="match status" value="1"/>
</dbReference>
<dbReference type="PANTHER" id="PTHR22594:SF5">
    <property type="entry name" value="ASPARTATE--TRNA LIGASE, MITOCHONDRIAL"/>
    <property type="match status" value="1"/>
</dbReference>
<dbReference type="PANTHER" id="PTHR22594">
    <property type="entry name" value="ASPARTYL/LYSYL-TRNA SYNTHETASE"/>
    <property type="match status" value="1"/>
</dbReference>
<dbReference type="Pfam" id="PF02938">
    <property type="entry name" value="GAD"/>
    <property type="match status" value="1"/>
</dbReference>
<dbReference type="Pfam" id="PF00152">
    <property type="entry name" value="tRNA-synt_2"/>
    <property type="match status" value="1"/>
</dbReference>
<dbReference type="Pfam" id="PF01336">
    <property type="entry name" value="tRNA_anti-codon"/>
    <property type="match status" value="1"/>
</dbReference>
<dbReference type="PRINTS" id="PR01042">
    <property type="entry name" value="TRNASYNTHASP"/>
</dbReference>
<dbReference type="SUPFAM" id="SSF55681">
    <property type="entry name" value="Class II aaRS and biotin synthetases"/>
    <property type="match status" value="1"/>
</dbReference>
<dbReference type="SUPFAM" id="SSF55261">
    <property type="entry name" value="GAD domain-like"/>
    <property type="match status" value="1"/>
</dbReference>
<dbReference type="SUPFAM" id="SSF50249">
    <property type="entry name" value="Nucleic acid-binding proteins"/>
    <property type="match status" value="1"/>
</dbReference>
<dbReference type="PROSITE" id="PS50862">
    <property type="entry name" value="AA_TRNA_LIGASE_II"/>
    <property type="match status" value="1"/>
</dbReference>
<name>SYDND_BORRA</name>
<keyword id="KW-0030">Aminoacyl-tRNA synthetase</keyword>
<keyword id="KW-0067">ATP-binding</keyword>
<keyword id="KW-0963">Cytoplasm</keyword>
<keyword id="KW-0436">Ligase</keyword>
<keyword id="KW-0547">Nucleotide-binding</keyword>
<keyword id="KW-0648">Protein biosynthesis</keyword>